<comment type="function">
    <text evidence="1">Component of the proteasome core, a large protease complex with broad specificity involved in protein degradation.</text>
</comment>
<comment type="catalytic activity">
    <reaction evidence="1">
        <text>Cleavage of peptide bonds with very broad specificity.</text>
        <dbReference type="EC" id="3.4.25.1"/>
    </reaction>
</comment>
<comment type="activity regulation">
    <text evidence="1">The formation of the proteasomal ATPase PAN-20S proteasome complex, via the docking of the C-termini of PAN into the intersubunit pockets in the alpha-rings, triggers opening of the gate for substrate entry. Interconversion between the open-gate and close-gate conformations leads to a dynamic regulation of the 20S proteasome proteolysis activity.</text>
</comment>
<comment type="subunit">
    <text evidence="1">The 20S proteasome core is composed of 14 alpha and 14 beta subunits that assemble into four stacked heptameric rings, resulting in a barrel-shaped structure. The two inner rings, each composed of seven catalytic beta subunits, are sandwiched by two outer rings, each composed of seven alpha subunits. The catalytic chamber with the active sites is on the inside of the barrel. Has a gated structure, the ends of the cylinder being occluded by the N-termini of the alpha-subunits. Is capped at one or both ends by the proteasome regulatory ATPase, PAN.</text>
</comment>
<comment type="subcellular location">
    <subcellularLocation>
        <location evidence="1">Cytoplasm</location>
    </subcellularLocation>
</comment>
<comment type="similarity">
    <text evidence="1">Belongs to the peptidase T1B family.</text>
</comment>
<organism>
    <name type="scientific">Pyrobaculum arsenaticum (strain DSM 13514 / JCM 11321 / PZ6)</name>
    <dbReference type="NCBI Taxonomy" id="340102"/>
    <lineage>
        <taxon>Archaea</taxon>
        <taxon>Thermoproteota</taxon>
        <taxon>Thermoprotei</taxon>
        <taxon>Thermoproteales</taxon>
        <taxon>Thermoproteaceae</taxon>
        <taxon>Pyrobaculum</taxon>
    </lineage>
</organism>
<evidence type="ECO:0000255" key="1">
    <source>
        <dbReference type="HAMAP-Rule" id="MF_02113"/>
    </source>
</evidence>
<name>PSB2_PYRAR</name>
<keyword id="KW-0068">Autocatalytic cleavage</keyword>
<keyword id="KW-0963">Cytoplasm</keyword>
<keyword id="KW-0378">Hydrolase</keyword>
<keyword id="KW-0645">Protease</keyword>
<keyword id="KW-0647">Proteasome</keyword>
<keyword id="KW-0888">Threonine protease</keyword>
<keyword id="KW-0865">Zymogen</keyword>
<gene>
    <name evidence="1" type="primary">psmB2</name>
    <name type="ordered locus">Pars_2211</name>
</gene>
<feature type="propeptide" id="PRO_0000397398" description="Removed in mature form; by autocatalysis" evidence="1">
    <location>
        <begin position="1"/>
        <end position="9"/>
    </location>
</feature>
<feature type="chain" id="PRO_0000397399" description="Proteasome subunit beta 2">
    <location>
        <begin position="10"/>
        <end position="203"/>
    </location>
</feature>
<feature type="active site" description="Nucleophile" evidence="1">
    <location>
        <position position="10"/>
    </location>
</feature>
<protein>
    <recommendedName>
        <fullName evidence="1">Proteasome subunit beta 2</fullName>
        <ecNumber evidence="1">3.4.25.1</ecNumber>
    </recommendedName>
    <alternativeName>
        <fullName evidence="1">20S proteasome beta subunit 2</fullName>
    </alternativeName>
    <alternativeName>
        <fullName evidence="1">Proteasome core protein PsmB 2</fullName>
    </alternativeName>
</protein>
<accession>A4WMZ0</accession>
<dbReference type="EC" id="3.4.25.1" evidence="1"/>
<dbReference type="EMBL" id="CP000660">
    <property type="protein sequence ID" value="ABP51757.1"/>
    <property type="molecule type" value="Genomic_DNA"/>
</dbReference>
<dbReference type="SMR" id="A4WMZ0"/>
<dbReference type="STRING" id="340102.Pars_2211"/>
<dbReference type="KEGG" id="pas:Pars_2211"/>
<dbReference type="HOGENOM" id="CLU_035750_7_2_2"/>
<dbReference type="OrthoDB" id="6330at2157"/>
<dbReference type="PhylomeDB" id="A4WMZ0"/>
<dbReference type="Proteomes" id="UP000001567">
    <property type="component" value="Chromosome"/>
</dbReference>
<dbReference type="GO" id="GO:0005737">
    <property type="term" value="C:cytoplasm"/>
    <property type="evidence" value="ECO:0007669"/>
    <property type="project" value="UniProtKB-SubCell"/>
</dbReference>
<dbReference type="GO" id="GO:0019774">
    <property type="term" value="C:proteasome core complex, beta-subunit complex"/>
    <property type="evidence" value="ECO:0007669"/>
    <property type="project" value="UniProtKB-UniRule"/>
</dbReference>
<dbReference type="GO" id="GO:0004298">
    <property type="term" value="F:threonine-type endopeptidase activity"/>
    <property type="evidence" value="ECO:0007669"/>
    <property type="project" value="UniProtKB-UniRule"/>
</dbReference>
<dbReference type="GO" id="GO:0010498">
    <property type="term" value="P:proteasomal protein catabolic process"/>
    <property type="evidence" value="ECO:0007669"/>
    <property type="project" value="UniProtKB-UniRule"/>
</dbReference>
<dbReference type="Gene3D" id="3.60.20.10">
    <property type="entry name" value="Glutamine Phosphoribosylpyrophosphate, subunit 1, domain 1"/>
    <property type="match status" value="1"/>
</dbReference>
<dbReference type="HAMAP" id="MF_02113_A">
    <property type="entry name" value="Proteasome_B_A"/>
    <property type="match status" value="1"/>
</dbReference>
<dbReference type="InterPro" id="IPR029055">
    <property type="entry name" value="Ntn_hydrolases_N"/>
</dbReference>
<dbReference type="InterPro" id="IPR019983">
    <property type="entry name" value="Pept_T1A_Psome_bsu_arc"/>
</dbReference>
<dbReference type="InterPro" id="IPR000243">
    <property type="entry name" value="Pept_T1A_subB"/>
</dbReference>
<dbReference type="InterPro" id="IPR016050">
    <property type="entry name" value="Proteasome_bsu_CS"/>
</dbReference>
<dbReference type="InterPro" id="IPR001353">
    <property type="entry name" value="Proteasome_sua/b"/>
</dbReference>
<dbReference type="InterPro" id="IPR023333">
    <property type="entry name" value="Proteasome_suB-type"/>
</dbReference>
<dbReference type="NCBIfam" id="TIGR03634">
    <property type="entry name" value="arc_protsome_B"/>
    <property type="match status" value="1"/>
</dbReference>
<dbReference type="PANTHER" id="PTHR32194:SF0">
    <property type="entry name" value="ATP-DEPENDENT PROTEASE SUBUNIT HSLV"/>
    <property type="match status" value="1"/>
</dbReference>
<dbReference type="PANTHER" id="PTHR32194">
    <property type="entry name" value="METALLOPROTEASE TLDD"/>
    <property type="match status" value="1"/>
</dbReference>
<dbReference type="Pfam" id="PF00227">
    <property type="entry name" value="Proteasome"/>
    <property type="match status" value="1"/>
</dbReference>
<dbReference type="PRINTS" id="PR00141">
    <property type="entry name" value="PROTEASOME"/>
</dbReference>
<dbReference type="SUPFAM" id="SSF56235">
    <property type="entry name" value="N-terminal nucleophile aminohydrolases (Ntn hydrolases)"/>
    <property type="match status" value="1"/>
</dbReference>
<dbReference type="PROSITE" id="PS00854">
    <property type="entry name" value="PROTEASOME_BETA_1"/>
    <property type="match status" value="1"/>
</dbReference>
<dbReference type="PROSITE" id="PS51476">
    <property type="entry name" value="PROTEASOME_BETA_2"/>
    <property type="match status" value="1"/>
</dbReference>
<sequence length="203" mass="21743">MGEEVQIGATAVGIKAKDGVVLAAEKRVSYGFYTLSSAGRKVFVIDDKLAIASAGIIADMQSLARIVKINAKAYELETRKKPTVRSMAKLLSVIMFSRRYMPFFAEVLVGGVDEEGSHLIVMDPLGSLIEDNYAALGTGAKLAISVLDTGYREDITLQDAKKLAVKALKAAIERDPVSGGGIDLVLIDQTGAKEEEVKVQLLI</sequence>
<reference key="1">
    <citation type="submission" date="2007-04" db="EMBL/GenBank/DDBJ databases">
        <title>Complete sequence of Pyrobaculum arsenaticum DSM 13514.</title>
        <authorList>
            <consortium name="US DOE Joint Genome Institute"/>
            <person name="Copeland A."/>
            <person name="Lucas S."/>
            <person name="Lapidus A."/>
            <person name="Barry K."/>
            <person name="Glavina del Rio T."/>
            <person name="Dalin E."/>
            <person name="Tice H."/>
            <person name="Pitluck S."/>
            <person name="Chain P."/>
            <person name="Malfatti S."/>
            <person name="Shin M."/>
            <person name="Vergez L."/>
            <person name="Schmutz J."/>
            <person name="Larimer F."/>
            <person name="Land M."/>
            <person name="Hauser L."/>
            <person name="Kyrpides N."/>
            <person name="Mikhailova N."/>
            <person name="Cozen A.E."/>
            <person name="Fitz-Gibbon S.T."/>
            <person name="House C.H."/>
            <person name="Saltikov C."/>
            <person name="Lowe T.M."/>
            <person name="Richardson P."/>
        </authorList>
    </citation>
    <scope>NUCLEOTIDE SEQUENCE [LARGE SCALE GENOMIC DNA]</scope>
    <source>
        <strain>ATCC 700994 / DSM 13514 / JCM 11321 / PZ6</strain>
    </source>
</reference>
<proteinExistence type="inferred from homology"/>